<comment type="function">
    <text evidence="1">Carrier of the growing fatty acid chain in fatty acid biosynthesis.</text>
</comment>
<comment type="pathway">
    <text evidence="1">Lipid metabolism; fatty acid biosynthesis.</text>
</comment>
<comment type="subcellular location">
    <subcellularLocation>
        <location evidence="1">Cytoplasm</location>
    </subcellularLocation>
</comment>
<comment type="PTM">
    <text evidence="1">4'-phosphopantetheine is transferred from CoA to a specific serine of apo-ACP by AcpS. This modification is essential for activity because fatty acids are bound in thioester linkage to the sulfhydryl of the prosthetic group.</text>
</comment>
<comment type="similarity">
    <text evidence="1">Belongs to the acyl carrier protein (ACP) family.</text>
</comment>
<protein>
    <recommendedName>
        <fullName evidence="1">Acyl carrier protein</fullName>
        <shortName evidence="1">ACP</shortName>
    </recommendedName>
</protein>
<keyword id="KW-0963">Cytoplasm</keyword>
<keyword id="KW-0275">Fatty acid biosynthesis</keyword>
<keyword id="KW-0276">Fatty acid metabolism</keyword>
<keyword id="KW-0444">Lipid biosynthesis</keyword>
<keyword id="KW-0443">Lipid metabolism</keyword>
<keyword id="KW-0596">Phosphopantetheine</keyword>
<keyword id="KW-0597">Phosphoprotein</keyword>
<proteinExistence type="inferred from homology"/>
<gene>
    <name evidence="1" type="primary">acpP</name>
    <name type="ordered locus">BMEA_A0495</name>
</gene>
<dbReference type="EMBL" id="CP001488">
    <property type="protein sequence ID" value="ACO00275.1"/>
    <property type="molecule type" value="Genomic_DNA"/>
</dbReference>
<dbReference type="RefSeq" id="WP_002963616.1">
    <property type="nucleotide sequence ID" value="NC_012441.1"/>
</dbReference>
<dbReference type="BMRB" id="C0RHG7"/>
<dbReference type="SMR" id="C0RHG7"/>
<dbReference type="KEGG" id="bmi:BMEA_A0495"/>
<dbReference type="HOGENOM" id="CLU_108696_5_1_5"/>
<dbReference type="UniPathway" id="UPA00094"/>
<dbReference type="Proteomes" id="UP000001748">
    <property type="component" value="Chromosome I"/>
</dbReference>
<dbReference type="GO" id="GO:0005829">
    <property type="term" value="C:cytosol"/>
    <property type="evidence" value="ECO:0007669"/>
    <property type="project" value="TreeGrafter"/>
</dbReference>
<dbReference type="GO" id="GO:0016020">
    <property type="term" value="C:membrane"/>
    <property type="evidence" value="ECO:0007669"/>
    <property type="project" value="GOC"/>
</dbReference>
<dbReference type="GO" id="GO:0000035">
    <property type="term" value="F:acyl binding"/>
    <property type="evidence" value="ECO:0007669"/>
    <property type="project" value="TreeGrafter"/>
</dbReference>
<dbReference type="GO" id="GO:0000036">
    <property type="term" value="F:acyl carrier activity"/>
    <property type="evidence" value="ECO:0007669"/>
    <property type="project" value="UniProtKB-UniRule"/>
</dbReference>
<dbReference type="GO" id="GO:0031177">
    <property type="term" value="F:phosphopantetheine binding"/>
    <property type="evidence" value="ECO:0007669"/>
    <property type="project" value="InterPro"/>
</dbReference>
<dbReference type="GO" id="GO:0009245">
    <property type="term" value="P:lipid A biosynthetic process"/>
    <property type="evidence" value="ECO:0007669"/>
    <property type="project" value="TreeGrafter"/>
</dbReference>
<dbReference type="FunFam" id="1.10.1200.10:FF:000001">
    <property type="entry name" value="Acyl carrier protein"/>
    <property type="match status" value="1"/>
</dbReference>
<dbReference type="Gene3D" id="1.10.1200.10">
    <property type="entry name" value="ACP-like"/>
    <property type="match status" value="1"/>
</dbReference>
<dbReference type="HAMAP" id="MF_01217">
    <property type="entry name" value="Acyl_carrier"/>
    <property type="match status" value="1"/>
</dbReference>
<dbReference type="InterPro" id="IPR003231">
    <property type="entry name" value="ACP"/>
</dbReference>
<dbReference type="InterPro" id="IPR036736">
    <property type="entry name" value="ACP-like_sf"/>
</dbReference>
<dbReference type="InterPro" id="IPR020806">
    <property type="entry name" value="PKS_PP-bd"/>
</dbReference>
<dbReference type="InterPro" id="IPR009081">
    <property type="entry name" value="PP-bd_ACP"/>
</dbReference>
<dbReference type="InterPro" id="IPR006162">
    <property type="entry name" value="Ppantetheine_attach_site"/>
</dbReference>
<dbReference type="NCBIfam" id="TIGR00517">
    <property type="entry name" value="acyl_carrier"/>
    <property type="match status" value="1"/>
</dbReference>
<dbReference type="NCBIfam" id="NF002148">
    <property type="entry name" value="PRK00982.1-2"/>
    <property type="match status" value="1"/>
</dbReference>
<dbReference type="NCBIfam" id="NF002149">
    <property type="entry name" value="PRK00982.1-3"/>
    <property type="match status" value="1"/>
</dbReference>
<dbReference type="NCBIfam" id="NF002150">
    <property type="entry name" value="PRK00982.1-4"/>
    <property type="match status" value="1"/>
</dbReference>
<dbReference type="NCBIfam" id="NF002151">
    <property type="entry name" value="PRK00982.1-5"/>
    <property type="match status" value="1"/>
</dbReference>
<dbReference type="PANTHER" id="PTHR20863">
    <property type="entry name" value="ACYL CARRIER PROTEIN"/>
    <property type="match status" value="1"/>
</dbReference>
<dbReference type="PANTHER" id="PTHR20863:SF76">
    <property type="entry name" value="CARRIER DOMAIN-CONTAINING PROTEIN"/>
    <property type="match status" value="1"/>
</dbReference>
<dbReference type="Pfam" id="PF00550">
    <property type="entry name" value="PP-binding"/>
    <property type="match status" value="1"/>
</dbReference>
<dbReference type="SMART" id="SM00823">
    <property type="entry name" value="PKS_PP"/>
    <property type="match status" value="1"/>
</dbReference>
<dbReference type="SUPFAM" id="SSF47336">
    <property type="entry name" value="ACP-like"/>
    <property type="match status" value="1"/>
</dbReference>
<dbReference type="PROSITE" id="PS50075">
    <property type="entry name" value="CARRIER"/>
    <property type="match status" value="1"/>
</dbReference>
<dbReference type="PROSITE" id="PS00012">
    <property type="entry name" value="PHOSPHOPANTETHEINE"/>
    <property type="match status" value="1"/>
</dbReference>
<name>ACP_BRUMB</name>
<accession>C0RHG7</accession>
<organism>
    <name type="scientific">Brucella melitensis biotype 2 (strain ATCC 23457)</name>
    <dbReference type="NCBI Taxonomy" id="546272"/>
    <lineage>
        <taxon>Bacteria</taxon>
        <taxon>Pseudomonadati</taxon>
        <taxon>Pseudomonadota</taxon>
        <taxon>Alphaproteobacteria</taxon>
        <taxon>Hyphomicrobiales</taxon>
        <taxon>Brucellaceae</taxon>
        <taxon>Brucella/Ochrobactrum group</taxon>
        <taxon>Brucella</taxon>
    </lineage>
</organism>
<reference key="1">
    <citation type="submission" date="2009-03" db="EMBL/GenBank/DDBJ databases">
        <title>Brucella melitensis ATCC 23457 whole genome shotgun sequencing project.</title>
        <authorList>
            <person name="Setubal J.C."/>
            <person name="Boyle S."/>
            <person name="Crasta O.R."/>
            <person name="Gillespie J.J."/>
            <person name="Kenyon R.W."/>
            <person name="Lu J."/>
            <person name="Mane S."/>
            <person name="Nagrani S."/>
            <person name="Shallom J.M."/>
            <person name="Shallom S."/>
            <person name="Shukla M."/>
            <person name="Snyder E.E."/>
            <person name="Sobral B.W."/>
            <person name="Wattam A.R."/>
            <person name="Will R."/>
            <person name="Williams K."/>
            <person name="Yoo H."/>
            <person name="Munk C."/>
            <person name="Tapia R."/>
            <person name="Han C."/>
            <person name="Detter J.C."/>
            <person name="Bruce D."/>
            <person name="Brettin T.S."/>
        </authorList>
    </citation>
    <scope>NUCLEOTIDE SEQUENCE [LARGE SCALE GENOMIC DNA]</scope>
    <source>
        <strain>ATCC 23457</strain>
    </source>
</reference>
<sequence length="78" mass="8301">MSDTAERVKKIVVEHLGVDADKVTEGASFIDDLGADSLDTVELVMAFEEEFGVEIPDDAAETILTVGDAVKFIDKASA</sequence>
<feature type="chain" id="PRO_1000164774" description="Acyl carrier protein">
    <location>
        <begin position="1"/>
        <end position="78"/>
    </location>
</feature>
<feature type="domain" description="Carrier" evidence="2">
    <location>
        <begin position="2"/>
        <end position="77"/>
    </location>
</feature>
<feature type="modified residue" description="O-(pantetheine 4'-phosphoryl)serine" evidence="2">
    <location>
        <position position="37"/>
    </location>
</feature>
<evidence type="ECO:0000255" key="1">
    <source>
        <dbReference type="HAMAP-Rule" id="MF_01217"/>
    </source>
</evidence>
<evidence type="ECO:0000255" key="2">
    <source>
        <dbReference type="PROSITE-ProRule" id="PRU00258"/>
    </source>
</evidence>